<sequence>MARLQAFKDPSFHSLVATFRSLPLIRRFVLGLILLLICQQLAVLTWRFLLPEDSRIVGVSVTPAQAKEKPATPGDFTLFGHAPDADASTVNDAALSGDIPLTSLNISLTGVLASGDAKRSIAIIAKDSQQYSRNVGDAIPGYEAKIVTISADRVVLQYQGRYEALHLYQEEEATGAPSSSGAFNQVKDEIQKDPFSAQDYLTISPVTEEEVLKGYQLNPGKNPDLFYRAGLQDNDLAVSLNGMDLRDADQAQQAMAQLAGMSKFNLTVERDGQQQDIYLALDGDH</sequence>
<protein>
    <recommendedName>
        <fullName>Type II secretion system protein C</fullName>
        <shortName>T2SS protein C</shortName>
    </recommendedName>
    <alternativeName>
        <fullName>General secretion pathway protein C</fullName>
    </alternativeName>
    <alternativeName>
        <fullName>Pectic enzymes secretion protein OutC</fullName>
    </alternativeName>
</protein>
<proteinExistence type="inferred from homology"/>
<feature type="chain" id="PRO_0000215001" description="Type II secretion system protein C">
    <location>
        <begin position="1"/>
        <end position="285"/>
    </location>
</feature>
<feature type="topological domain" description="Cytoplasmic" evidence="1">
    <location>
        <begin position="1"/>
        <end position="27"/>
    </location>
</feature>
<feature type="transmembrane region" description="Helical" evidence="1">
    <location>
        <begin position="28"/>
        <end position="48"/>
    </location>
</feature>
<feature type="topological domain" description="Periplasmic" evidence="1">
    <location>
        <begin position="49"/>
        <end position="285"/>
    </location>
</feature>
<evidence type="ECO:0000255" key="1"/>
<evidence type="ECO:0000305" key="2"/>
<gene>
    <name type="primary">outC</name>
</gene>
<name>GSPC_PECCC</name>
<accession>P31699</accession>
<organism>
    <name type="scientific">Pectobacterium carotovorum subsp. carotovorum</name>
    <name type="common">Erwinia carotovora subsp. carotovora</name>
    <dbReference type="NCBI Taxonomy" id="555"/>
    <lineage>
        <taxon>Bacteria</taxon>
        <taxon>Pseudomonadati</taxon>
        <taxon>Pseudomonadota</taxon>
        <taxon>Gammaproteobacteria</taxon>
        <taxon>Enterobacterales</taxon>
        <taxon>Pectobacteriaceae</taxon>
        <taxon>Pectobacterium</taxon>
    </lineage>
</organism>
<comment type="function">
    <text>Involved in a type II secretion system (T2SS, formerly general secretion pathway, GSP) for the export of proteins. Required for the translocation of the multiple pectic enzymes.</text>
</comment>
<comment type="subcellular location">
    <subcellularLocation>
        <location evidence="2">Cell inner membrane</location>
    </subcellularLocation>
</comment>
<comment type="similarity">
    <text evidence="2">Belongs to the GSP C family.</text>
</comment>
<reference key="1">
    <citation type="journal article" date="1993" name="Mol. Microbiol.">
        <title>Molecular cloning and characterization of 13 out genes from Erwinia carotovora subspecies carotovora: genes encoding members of a general secretion pathway (GSP) widespread in Gram-negative bacteria.</title>
        <authorList>
            <person name="Reeves P.J."/>
            <person name="Whitcombe D."/>
            <person name="Wharam S."/>
            <person name="Gibson M."/>
            <person name="Allison G."/>
            <person name="Bunce N."/>
            <person name="Barallon R."/>
            <person name="Douglas P."/>
            <person name="Mulholland V."/>
            <person name="Stevens S."/>
            <person name="Walker S."/>
            <person name="Salmond G.P.C."/>
        </authorList>
    </citation>
    <scope>NUCLEOTIDE SEQUENCE [GENOMIC DNA]</scope>
    <source>
        <strain>SCRI 193</strain>
    </source>
</reference>
<keyword id="KW-0997">Cell inner membrane</keyword>
<keyword id="KW-1003">Cell membrane</keyword>
<keyword id="KW-0472">Membrane</keyword>
<keyword id="KW-0653">Protein transport</keyword>
<keyword id="KW-0812">Transmembrane</keyword>
<keyword id="KW-1133">Transmembrane helix</keyword>
<keyword id="KW-0813">Transport</keyword>
<dbReference type="EMBL" id="X70049">
    <property type="protein sequence ID" value="CAA49644.1"/>
    <property type="molecule type" value="Genomic_DNA"/>
</dbReference>
<dbReference type="PIR" id="S32857">
    <property type="entry name" value="S32857"/>
</dbReference>
<dbReference type="SMR" id="P31699"/>
<dbReference type="GO" id="GO:0005886">
    <property type="term" value="C:plasma membrane"/>
    <property type="evidence" value="ECO:0007669"/>
    <property type="project" value="UniProtKB-SubCell"/>
</dbReference>
<dbReference type="GO" id="GO:0015627">
    <property type="term" value="C:type II protein secretion system complex"/>
    <property type="evidence" value="ECO:0007669"/>
    <property type="project" value="InterPro"/>
</dbReference>
<dbReference type="GO" id="GO:0015628">
    <property type="term" value="P:protein secretion by the type II secretion system"/>
    <property type="evidence" value="ECO:0007669"/>
    <property type="project" value="InterPro"/>
</dbReference>
<dbReference type="Gene3D" id="2.30.30.830">
    <property type="match status" value="1"/>
</dbReference>
<dbReference type="Gene3D" id="2.30.42.10">
    <property type="match status" value="1"/>
</dbReference>
<dbReference type="InterPro" id="IPR036034">
    <property type="entry name" value="PDZ_sf"/>
</dbReference>
<dbReference type="InterPro" id="IPR024961">
    <property type="entry name" value="T2SS_GspC_N"/>
</dbReference>
<dbReference type="InterPro" id="IPR001639">
    <property type="entry name" value="T2SS_protein-GspC"/>
</dbReference>
<dbReference type="NCBIfam" id="TIGR01713">
    <property type="entry name" value="typeII_sec_gspC"/>
    <property type="match status" value="1"/>
</dbReference>
<dbReference type="Pfam" id="PF11356">
    <property type="entry name" value="T2SSC"/>
    <property type="match status" value="1"/>
</dbReference>
<dbReference type="PRINTS" id="PR00810">
    <property type="entry name" value="BCTERIALGSPC"/>
</dbReference>
<dbReference type="SUPFAM" id="SSF50156">
    <property type="entry name" value="PDZ domain-like"/>
    <property type="match status" value="1"/>
</dbReference>
<dbReference type="PROSITE" id="PS01141">
    <property type="entry name" value="T2SP_C"/>
    <property type="match status" value="1"/>
</dbReference>